<dbReference type="EMBL" id="L02899">
    <property type="status" value="NOT_ANNOTATED_CDS"/>
    <property type="molecule type" value="Genomic_DNA"/>
</dbReference>
<dbReference type="EMBL" id="Z54141">
    <property type="protein sequence ID" value="CAA90827.1"/>
    <property type="molecule type" value="Genomic_DNA"/>
</dbReference>
<dbReference type="EMBL" id="Z49212">
    <property type="protein sequence ID" value="CAA89142.1"/>
    <property type="molecule type" value="Genomic_DNA"/>
</dbReference>
<dbReference type="EMBL" id="BK006946">
    <property type="protein sequence ID" value="DAA10210.1"/>
    <property type="molecule type" value="Genomic_DNA"/>
</dbReference>
<dbReference type="PIR" id="A46417">
    <property type="entry name" value="A46417"/>
</dbReference>
<dbReference type="RefSeq" id="NP_014040.1">
    <property type="nucleotide sequence ID" value="NM_001182820.1"/>
</dbReference>
<dbReference type="PDB" id="3JAP">
    <property type="method" value="EM"/>
    <property type="resolution" value="4.90 A"/>
    <property type="chains" value="p=193-812"/>
</dbReference>
<dbReference type="PDB" id="4U1C">
    <property type="method" value="X-ray"/>
    <property type="resolution" value="3.50 A"/>
    <property type="chains" value="C=247-812"/>
</dbReference>
<dbReference type="PDB" id="5H7U">
    <property type="method" value="NMR"/>
    <property type="chains" value="A=36-163"/>
</dbReference>
<dbReference type="PDB" id="6FYX">
    <property type="method" value="EM"/>
    <property type="resolution" value="3.05 A"/>
    <property type="chains" value="q=251-812"/>
</dbReference>
<dbReference type="PDB" id="6FYY">
    <property type="method" value="EM"/>
    <property type="resolution" value="3.05 A"/>
    <property type="chains" value="q=251-812"/>
</dbReference>
<dbReference type="PDB" id="6GSM">
    <property type="method" value="EM"/>
    <property type="resolution" value="5.15 A"/>
    <property type="chains" value="q=96-794"/>
</dbReference>
<dbReference type="PDB" id="6GSN">
    <property type="method" value="EM"/>
    <property type="resolution" value="5.75 A"/>
    <property type="chains" value="q=96-794"/>
</dbReference>
<dbReference type="PDB" id="6ZCE">
    <property type="method" value="EM"/>
    <property type="resolution" value="5.30 A"/>
    <property type="chains" value="q=1-812"/>
</dbReference>
<dbReference type="PDB" id="6ZU9">
    <property type="method" value="EM"/>
    <property type="resolution" value="6.20 A"/>
    <property type="chains" value="q=1-812"/>
</dbReference>
<dbReference type="PDB" id="8CAH">
    <property type="method" value="EM"/>
    <property type="resolution" value="3.00 A"/>
    <property type="chains" value="q=1-812"/>
</dbReference>
<dbReference type="PDB" id="8CAS">
    <property type="method" value="EM"/>
    <property type="resolution" value="3.30 A"/>
    <property type="chains" value="q=1-812"/>
</dbReference>
<dbReference type="PDB" id="8S8E">
    <property type="method" value="EM"/>
    <property type="resolution" value="3.85 A"/>
    <property type="chains" value="p=1-812"/>
</dbReference>
<dbReference type="PDB" id="8S8K">
    <property type="method" value="EM"/>
    <property type="resolution" value="4.00 A"/>
    <property type="chains" value="n=1-812"/>
</dbReference>
<dbReference type="PDBsum" id="3JAP"/>
<dbReference type="PDBsum" id="4U1C"/>
<dbReference type="PDBsum" id="5H7U"/>
<dbReference type="PDBsum" id="6FYX"/>
<dbReference type="PDBsum" id="6FYY"/>
<dbReference type="PDBsum" id="6GSM"/>
<dbReference type="PDBsum" id="6GSN"/>
<dbReference type="PDBsum" id="6ZCE"/>
<dbReference type="PDBsum" id="6ZU9"/>
<dbReference type="PDBsum" id="8CAH"/>
<dbReference type="PDBsum" id="8CAS"/>
<dbReference type="PDBsum" id="8S8E"/>
<dbReference type="PDBsum" id="8S8K"/>
<dbReference type="EMDB" id="EMD-0057"/>
<dbReference type="EMDB" id="EMD-0058"/>
<dbReference type="EMDB" id="EMD-11160"/>
<dbReference type="EMDB" id="EMD-11439"/>
<dbReference type="EMDB" id="EMD-16525"/>
<dbReference type="EMDB" id="EMD-19802"/>
<dbReference type="EMDB" id="EMD-19808"/>
<dbReference type="EMDB" id="EMD-4327"/>
<dbReference type="EMDB" id="EMD-4328"/>
<dbReference type="SMR" id="P32497"/>
<dbReference type="BioGRID" id="35489">
    <property type="interactions" value="299"/>
</dbReference>
<dbReference type="ComplexPortal" id="CPX-1831">
    <property type="entry name" value="Eukaryotic translation initiation factor 3 core complex"/>
</dbReference>
<dbReference type="DIP" id="DIP-1470N"/>
<dbReference type="FunCoup" id="P32497">
    <property type="interactions" value="1456"/>
</dbReference>
<dbReference type="IntAct" id="P32497">
    <property type="interactions" value="68"/>
</dbReference>
<dbReference type="MINT" id="P32497"/>
<dbReference type="STRING" id="4932.YMR309C"/>
<dbReference type="iPTMnet" id="P32497"/>
<dbReference type="PaxDb" id="4932-YMR309C"/>
<dbReference type="PeptideAtlas" id="P32497"/>
<dbReference type="EnsemblFungi" id="YMR309C_mRNA">
    <property type="protein sequence ID" value="YMR309C"/>
    <property type="gene ID" value="YMR309C"/>
</dbReference>
<dbReference type="GeneID" id="855357"/>
<dbReference type="KEGG" id="sce:YMR309C"/>
<dbReference type="AGR" id="SGD:S000004926"/>
<dbReference type="SGD" id="S000004926">
    <property type="gene designation" value="NIP1"/>
</dbReference>
<dbReference type="VEuPathDB" id="FungiDB:YMR309C"/>
<dbReference type="eggNOG" id="KOG1076">
    <property type="taxonomic scope" value="Eukaryota"/>
</dbReference>
<dbReference type="GeneTree" id="ENSGT00390000017900"/>
<dbReference type="HOGENOM" id="CLU_004304_0_2_1"/>
<dbReference type="InParanoid" id="P32497"/>
<dbReference type="OMA" id="FRCGLIK"/>
<dbReference type="OrthoDB" id="29647at2759"/>
<dbReference type="BioCyc" id="YEAST:G3O-32973-MONOMER"/>
<dbReference type="Reactome" id="R-SCE-156827">
    <property type="pathway name" value="L13a-mediated translational silencing of Ceruloplasmin expression"/>
</dbReference>
<dbReference type="Reactome" id="R-SCE-72649">
    <property type="pathway name" value="Translation initiation complex formation"/>
</dbReference>
<dbReference type="Reactome" id="R-SCE-72695">
    <property type="pathway name" value="Formation of the ternary complex, and subsequently, the 43S complex"/>
</dbReference>
<dbReference type="Reactome" id="R-SCE-72702">
    <property type="pathway name" value="Ribosomal scanning and start codon recognition"/>
</dbReference>
<dbReference type="BioGRID-ORCS" id="855357">
    <property type="hits" value="8 hits in 10 CRISPR screens"/>
</dbReference>
<dbReference type="CD-CODE" id="E03F929F">
    <property type="entry name" value="Stress granule"/>
</dbReference>
<dbReference type="EvolutionaryTrace" id="P32497"/>
<dbReference type="PRO" id="PR:P32497"/>
<dbReference type="Proteomes" id="UP000002311">
    <property type="component" value="Chromosome XIII"/>
</dbReference>
<dbReference type="RNAct" id="P32497">
    <property type="molecule type" value="protein"/>
</dbReference>
<dbReference type="GO" id="GO:0005737">
    <property type="term" value="C:cytoplasm"/>
    <property type="evidence" value="ECO:0000314"/>
    <property type="project" value="SGD"/>
</dbReference>
<dbReference type="GO" id="GO:0010494">
    <property type="term" value="C:cytoplasmic stress granule"/>
    <property type="evidence" value="ECO:0000314"/>
    <property type="project" value="SGD"/>
</dbReference>
<dbReference type="GO" id="GO:0016282">
    <property type="term" value="C:eukaryotic 43S preinitiation complex"/>
    <property type="evidence" value="ECO:0007669"/>
    <property type="project" value="UniProtKB-UniRule"/>
</dbReference>
<dbReference type="GO" id="GO:0033290">
    <property type="term" value="C:eukaryotic 48S preinitiation complex"/>
    <property type="evidence" value="ECO:0007669"/>
    <property type="project" value="UniProtKB-UniRule"/>
</dbReference>
<dbReference type="GO" id="GO:0005852">
    <property type="term" value="C:eukaryotic translation initiation factor 3 complex"/>
    <property type="evidence" value="ECO:0000314"/>
    <property type="project" value="SGD"/>
</dbReference>
<dbReference type="GO" id="GO:0043614">
    <property type="term" value="C:multi-eIF complex"/>
    <property type="evidence" value="ECO:0000314"/>
    <property type="project" value="SGD"/>
</dbReference>
<dbReference type="GO" id="GO:0003729">
    <property type="term" value="F:mRNA binding"/>
    <property type="evidence" value="ECO:0007005"/>
    <property type="project" value="SGD"/>
</dbReference>
<dbReference type="GO" id="GO:0003743">
    <property type="term" value="F:translation initiation factor activity"/>
    <property type="evidence" value="ECO:0000314"/>
    <property type="project" value="SGD"/>
</dbReference>
<dbReference type="GO" id="GO:0031369">
    <property type="term" value="F:translation initiation factor binding"/>
    <property type="evidence" value="ECO:0000314"/>
    <property type="project" value="SGD"/>
</dbReference>
<dbReference type="GO" id="GO:0001732">
    <property type="term" value="P:formation of cytoplasmic translation initiation complex"/>
    <property type="evidence" value="ECO:0007669"/>
    <property type="project" value="UniProtKB-UniRule"/>
</dbReference>
<dbReference type="GO" id="GO:0006413">
    <property type="term" value="P:translational initiation"/>
    <property type="evidence" value="ECO:0000314"/>
    <property type="project" value="ComplexPortal"/>
</dbReference>
<dbReference type="HAMAP" id="MF_03002">
    <property type="entry name" value="eIF3c"/>
    <property type="match status" value="1"/>
</dbReference>
<dbReference type="InterPro" id="IPR027516">
    <property type="entry name" value="EIF3C"/>
</dbReference>
<dbReference type="InterPro" id="IPR008905">
    <property type="entry name" value="EIF3C_N_dom"/>
</dbReference>
<dbReference type="InterPro" id="IPR000717">
    <property type="entry name" value="PCI_dom"/>
</dbReference>
<dbReference type="PANTHER" id="PTHR13937">
    <property type="entry name" value="EUKARYOTIC TRANSLATION INITATION FACTOR 3, SUBUNIT 8 EIF3S8 -RELATED"/>
    <property type="match status" value="1"/>
</dbReference>
<dbReference type="PANTHER" id="PTHR13937:SF0">
    <property type="entry name" value="EUKARYOTIC TRANSLATION INITIATION FACTOR 3 SUBUNIT C-RELATED"/>
    <property type="match status" value="1"/>
</dbReference>
<dbReference type="Pfam" id="PF05470">
    <property type="entry name" value="eIF-3c_N"/>
    <property type="match status" value="1"/>
</dbReference>
<dbReference type="Pfam" id="PF01399">
    <property type="entry name" value="PCI"/>
    <property type="match status" value="1"/>
</dbReference>
<dbReference type="SMART" id="SM00088">
    <property type="entry name" value="PINT"/>
    <property type="match status" value="1"/>
</dbReference>
<dbReference type="PROSITE" id="PS50250">
    <property type="entry name" value="PCI"/>
    <property type="match status" value="1"/>
</dbReference>
<feature type="chain" id="PRO_0000123530" description="Eukaryotic translation initiation factor 3 subunit C">
    <location>
        <begin position="1"/>
        <end position="812"/>
    </location>
</feature>
<feature type="domain" description="PCI" evidence="2">
    <location>
        <begin position="608"/>
        <end position="783"/>
    </location>
</feature>
<feature type="region of interest" description="Disordered" evidence="3">
    <location>
        <begin position="1"/>
        <end position="110"/>
    </location>
</feature>
<feature type="compositionally biased region" description="Acidic residues" evidence="3">
    <location>
        <begin position="18"/>
        <end position="30"/>
    </location>
</feature>
<feature type="compositionally biased region" description="Acidic residues" evidence="3">
    <location>
        <begin position="38"/>
        <end position="64"/>
    </location>
</feature>
<feature type="modified residue" description="Phosphoserine" evidence="14 15">
    <location>
        <position position="98"/>
    </location>
</feature>
<feature type="modified residue" description="Phosphoserine" evidence="14 15">
    <location>
        <position position="99"/>
    </location>
</feature>
<feature type="modified residue" description="Phosphoserine" evidence="14 15">
    <location>
        <position position="103"/>
    </location>
</feature>
<feature type="sequence conflict" description="In Ref. 1; L02899." evidence="13" ref="1">
    <original>V</original>
    <variation>D</variation>
    <location>
        <position position="111"/>
    </location>
</feature>
<feature type="sequence conflict" description="In Ref. 1; L02899." evidence="13" ref="1">
    <original>Q</original>
    <variation>H</variation>
    <location>
        <position position="583"/>
    </location>
</feature>
<feature type="sequence conflict" description="In Ref. 1; L02899." evidence="13" ref="1">
    <original>K</original>
    <variation>N</variation>
    <location>
        <position position="641"/>
    </location>
</feature>
<feature type="sequence conflict" description="In Ref. 1; L02899." evidence="13" ref="1">
    <original>K</original>
    <variation>N</variation>
    <location>
        <position position="643"/>
    </location>
</feature>
<feature type="strand" evidence="17">
    <location>
        <begin position="84"/>
        <end position="86"/>
    </location>
</feature>
<feature type="helix" evidence="18">
    <location>
        <begin position="117"/>
        <end position="135"/>
    </location>
</feature>
<feature type="strand" evidence="17">
    <location>
        <begin position="136"/>
        <end position="138"/>
    </location>
</feature>
<feature type="helix" evidence="18">
    <location>
        <begin position="142"/>
        <end position="158"/>
    </location>
</feature>
<feature type="helix" evidence="18">
    <location>
        <begin position="165"/>
        <end position="179"/>
    </location>
</feature>
<feature type="helix" evidence="18">
    <location>
        <begin position="191"/>
        <end position="206"/>
    </location>
</feature>
<feature type="helix" evidence="18">
    <location>
        <begin position="210"/>
        <end position="213"/>
    </location>
</feature>
<feature type="helix" evidence="18">
    <location>
        <begin position="252"/>
        <end position="265"/>
    </location>
</feature>
<feature type="strand" evidence="16">
    <location>
        <begin position="267"/>
        <end position="269"/>
    </location>
</feature>
<feature type="helix" evidence="18">
    <location>
        <begin position="272"/>
        <end position="285"/>
    </location>
</feature>
<feature type="helix" evidence="18">
    <location>
        <begin position="289"/>
        <end position="296"/>
    </location>
</feature>
<feature type="helix" evidence="18">
    <location>
        <begin position="300"/>
        <end position="306"/>
    </location>
</feature>
<feature type="strand" evidence="18">
    <location>
        <begin position="309"/>
        <end position="312"/>
    </location>
</feature>
<feature type="helix" evidence="18">
    <location>
        <begin position="315"/>
        <end position="335"/>
    </location>
</feature>
<feature type="turn" evidence="18">
    <location>
        <begin position="338"/>
        <end position="345"/>
    </location>
</feature>
<feature type="turn" evidence="18">
    <location>
        <begin position="353"/>
        <end position="355"/>
    </location>
</feature>
<feature type="strand" evidence="18">
    <location>
        <begin position="362"/>
        <end position="367"/>
    </location>
</feature>
<feature type="helix" evidence="18">
    <location>
        <begin position="369"/>
        <end position="386"/>
    </location>
</feature>
<feature type="strand" evidence="18">
    <location>
        <begin position="389"/>
        <end position="391"/>
    </location>
</feature>
<feature type="helix" evidence="18">
    <location>
        <begin position="392"/>
        <end position="418"/>
    </location>
</feature>
<feature type="helix" evidence="18">
    <location>
        <begin position="422"/>
        <end position="438"/>
    </location>
</feature>
<feature type="strand" evidence="18">
    <location>
        <begin position="441"/>
        <end position="443"/>
    </location>
</feature>
<feature type="helix" evidence="18">
    <location>
        <begin position="445"/>
        <end position="458"/>
    </location>
</feature>
<feature type="helix" evidence="16">
    <location>
        <begin position="469"/>
        <end position="472"/>
    </location>
</feature>
<feature type="helix" evidence="18">
    <location>
        <begin position="479"/>
        <end position="490"/>
    </location>
</feature>
<feature type="helix" evidence="18">
    <location>
        <begin position="496"/>
        <end position="512"/>
    </location>
</feature>
<feature type="helix" evidence="18">
    <location>
        <begin position="517"/>
        <end position="526"/>
    </location>
</feature>
<feature type="helix" evidence="18">
    <location>
        <begin position="531"/>
        <end position="534"/>
    </location>
</feature>
<feature type="helix" evidence="18">
    <location>
        <begin position="538"/>
        <end position="556"/>
    </location>
</feature>
<feature type="helix" evidence="18">
    <location>
        <begin position="560"/>
        <end position="567"/>
    </location>
</feature>
<feature type="turn" evidence="18">
    <location>
        <begin position="568"/>
        <end position="570"/>
    </location>
</feature>
<feature type="strand" evidence="18">
    <location>
        <begin position="571"/>
        <end position="574"/>
    </location>
</feature>
<feature type="helix" evidence="18">
    <location>
        <begin position="577"/>
        <end position="580"/>
    </location>
</feature>
<feature type="helix" evidence="18">
    <location>
        <begin position="585"/>
        <end position="587"/>
    </location>
</feature>
<feature type="turn" evidence="18">
    <location>
        <begin position="588"/>
        <end position="591"/>
    </location>
</feature>
<feature type="strand" evidence="18">
    <location>
        <begin position="594"/>
        <end position="597"/>
    </location>
</feature>
<feature type="helix" evidence="18">
    <location>
        <begin position="600"/>
        <end position="603"/>
    </location>
</feature>
<feature type="helix" evidence="18">
    <location>
        <begin position="608"/>
        <end position="610"/>
    </location>
</feature>
<feature type="helix" evidence="18">
    <location>
        <begin position="614"/>
        <end position="638"/>
    </location>
</feature>
<feature type="helix" evidence="18">
    <location>
        <begin position="652"/>
        <end position="661"/>
    </location>
</feature>
<feature type="helix" evidence="18">
    <location>
        <begin position="671"/>
        <end position="684"/>
    </location>
</feature>
<feature type="helix" evidence="18">
    <location>
        <begin position="688"/>
        <end position="696"/>
    </location>
</feature>
<feature type="helix" evidence="18">
    <location>
        <begin position="698"/>
        <end position="702"/>
    </location>
</feature>
<feature type="helix" evidence="18">
    <location>
        <begin position="707"/>
        <end position="728"/>
    </location>
</feature>
<feature type="turn" evidence="16">
    <location>
        <begin position="730"/>
        <end position="732"/>
    </location>
</feature>
<feature type="strand" evidence="16">
    <location>
        <begin position="733"/>
        <end position="737"/>
    </location>
</feature>
<feature type="helix" evidence="18">
    <location>
        <begin position="738"/>
        <end position="744"/>
    </location>
</feature>
<feature type="helix" evidence="18">
    <location>
        <begin position="749"/>
        <end position="763"/>
    </location>
</feature>
<feature type="strand" evidence="16">
    <location>
        <begin position="768"/>
        <end position="770"/>
    </location>
</feature>
<feature type="strand" evidence="18">
    <location>
        <begin position="771"/>
        <end position="773"/>
    </location>
</feature>
<feature type="strand" evidence="16">
    <location>
        <begin position="775"/>
        <end position="777"/>
    </location>
</feature>
<feature type="helix" evidence="18">
    <location>
        <begin position="784"/>
        <end position="793"/>
    </location>
</feature>
<comment type="function">
    <text evidence="1 5">Component of the eukaryotic translation initiation factor 3 (eIF-3) complex, which is involved in protein synthesis of a specialized repertoire of mRNAs and, together with other initiation factors, stimulates binding of mRNA and methionyl-tRNAi to the 40S ribosome. The eIF-3 complex specifically targets and initiates translation of a subset of mRNAs involved in cell proliferation.</text>
</comment>
<comment type="subunit">
    <text evidence="4 5 8 9 10 11 12">The eukaryotic translation initiation factor 3 (eIF-3) core complex is composed of TIF32, PRT1, NIP1, TIF34 and TIF35. A subcomplex of TIF32, NIP1 and PRT1 mediates the interaction with eIF-1, TIF5/eIF-5 and HCR1. The factors eIF-1, eIF-2, eIF-3, TIF5/eIF-5 and methionyl-tRNAi form a multifactor complex (MFC) that may bind to the 40S ribosome. TIF32, NIP1 and TIF5/eIF-5 comprise a minimal 40S-ribosome-binding unit. NIP1 interacts with TIF5/eIF-5 and SUI1.</text>
</comment>
<comment type="interaction">
    <interactant intactId="EBI-8965">
        <id>P32497</id>
    </interactant>
    <interactant intactId="EBI-8973">
        <id>P06103</id>
        <label>PRT1</label>
    </interactant>
    <organismsDiffer>false</organismsDiffer>
    <experiments>13</experiments>
</comment>
<comment type="interaction">
    <interactant intactId="EBI-8965">
        <id>P32497</id>
    </interactant>
    <interactant intactId="EBI-15777">
        <id>P20433</id>
        <label>RPB4</label>
    </interactant>
    <organismsDiffer>false</organismsDiffer>
    <experiments>5</experiments>
</comment>
<comment type="interaction">
    <interactant intactId="EBI-8965">
        <id>P32497</id>
    </interactant>
    <interactant intactId="EBI-8981">
        <id>P38249</id>
        <label>RPG1</label>
    </interactant>
    <organismsDiffer>false</organismsDiffer>
    <experiments>14</experiments>
</comment>
<comment type="interaction">
    <interactant intactId="EBI-8965">
        <id>P32497</id>
    </interactant>
    <interactant intactId="EBI-18527">
        <id>P32911</id>
        <label>SUI1</label>
    </interactant>
    <organismsDiffer>false</organismsDiffer>
    <experiments>3</experiments>
</comment>
<comment type="interaction">
    <interactant intactId="EBI-8965">
        <id>P32497</id>
    </interactant>
    <interactant intactId="EBI-9038">
        <id>P38431</id>
        <label>TIF5</label>
    </interactant>
    <organismsDiffer>false</organismsDiffer>
    <experiments>6</experiments>
</comment>
<comment type="subcellular location">
    <subcellularLocation>
        <location evidence="1 6">Cytoplasm</location>
    </subcellularLocation>
    <text>Mainly cytoplasmic.</text>
</comment>
<comment type="miscellaneous">
    <text evidence="7">Present with 78900 molecules/cell in log phase SD medium.</text>
</comment>
<comment type="similarity">
    <text evidence="1">Belongs to the eIF-3 subunit C family.</text>
</comment>
<accession>P32497</accession>
<accession>D6W0D6</accession>
<evidence type="ECO:0000255" key="1">
    <source>
        <dbReference type="HAMAP-Rule" id="MF_03002"/>
    </source>
</evidence>
<evidence type="ECO:0000255" key="2">
    <source>
        <dbReference type="PROSITE-ProRule" id="PRU01185"/>
    </source>
</evidence>
<evidence type="ECO:0000256" key="3">
    <source>
        <dbReference type="SAM" id="MobiDB-lite"/>
    </source>
</evidence>
<evidence type="ECO:0000269" key="4">
    <source>
    </source>
</evidence>
<evidence type="ECO:0000269" key="5">
    <source>
    </source>
</evidence>
<evidence type="ECO:0000269" key="6">
    <source>
    </source>
</evidence>
<evidence type="ECO:0000269" key="7">
    <source>
    </source>
</evidence>
<evidence type="ECO:0000269" key="8">
    <source>
    </source>
</evidence>
<evidence type="ECO:0000269" key="9">
    <source>
    </source>
</evidence>
<evidence type="ECO:0000269" key="10">
    <source>
    </source>
</evidence>
<evidence type="ECO:0000269" key="11">
    <source>
    </source>
</evidence>
<evidence type="ECO:0000269" key="12">
    <source>
    </source>
</evidence>
<evidence type="ECO:0000305" key="13"/>
<evidence type="ECO:0007744" key="14">
    <source>
    </source>
</evidence>
<evidence type="ECO:0007744" key="15">
    <source>
    </source>
</evidence>
<evidence type="ECO:0007829" key="16">
    <source>
        <dbReference type="PDB" id="4U1C"/>
    </source>
</evidence>
<evidence type="ECO:0007829" key="17">
    <source>
        <dbReference type="PDB" id="5H7U"/>
    </source>
</evidence>
<evidence type="ECO:0007829" key="18">
    <source>
        <dbReference type="PDB" id="8CAS"/>
    </source>
</evidence>
<organism>
    <name type="scientific">Saccharomyces cerevisiae (strain ATCC 204508 / S288c)</name>
    <name type="common">Baker's yeast</name>
    <dbReference type="NCBI Taxonomy" id="559292"/>
    <lineage>
        <taxon>Eukaryota</taxon>
        <taxon>Fungi</taxon>
        <taxon>Dikarya</taxon>
        <taxon>Ascomycota</taxon>
        <taxon>Saccharomycotina</taxon>
        <taxon>Saccharomycetes</taxon>
        <taxon>Saccharomycetales</taxon>
        <taxon>Saccharomycetaceae</taxon>
        <taxon>Saccharomyces</taxon>
    </lineage>
</organism>
<reference key="1">
    <citation type="journal article" date="1992" name="Proc. Natl. Acad. Sci. U.S.A.">
        <title>NIP1, a gene required for nuclear transport in yeast.</title>
        <authorList>
            <person name="Gu Z."/>
            <person name="Moerschell R.P."/>
            <person name="Sherman F."/>
            <person name="Goldfarb D.S."/>
        </authorList>
    </citation>
    <scope>NUCLEOTIDE SEQUENCE [GENOMIC DNA]</scope>
    <scope>SUBCELLULAR LOCATION</scope>
</reference>
<reference key="2">
    <citation type="journal article" date="1997" name="Nature">
        <title>The nucleotide sequence of Saccharomyces cerevisiae chromosome XIII.</title>
        <authorList>
            <person name="Bowman S."/>
            <person name="Churcher C.M."/>
            <person name="Badcock K."/>
            <person name="Brown D."/>
            <person name="Chillingworth T."/>
            <person name="Connor R."/>
            <person name="Dedman K."/>
            <person name="Devlin K."/>
            <person name="Gentles S."/>
            <person name="Hamlin N."/>
            <person name="Hunt S."/>
            <person name="Jagels K."/>
            <person name="Lye G."/>
            <person name="Moule S."/>
            <person name="Odell C."/>
            <person name="Pearson D."/>
            <person name="Rajandream M.A."/>
            <person name="Rice P."/>
            <person name="Skelton J."/>
            <person name="Walsh S.V."/>
            <person name="Whitehead S."/>
            <person name="Barrell B.G."/>
        </authorList>
    </citation>
    <scope>NUCLEOTIDE SEQUENCE [LARGE SCALE GENOMIC DNA]</scope>
    <source>
        <strain>ATCC 204508 / S288c</strain>
    </source>
</reference>
<reference key="3">
    <citation type="journal article" date="2014" name="G3 (Bethesda)">
        <title>The reference genome sequence of Saccharomyces cerevisiae: Then and now.</title>
        <authorList>
            <person name="Engel S.R."/>
            <person name="Dietrich F.S."/>
            <person name="Fisk D.G."/>
            <person name="Binkley G."/>
            <person name="Balakrishnan R."/>
            <person name="Costanzo M.C."/>
            <person name="Dwight S.S."/>
            <person name="Hitz B.C."/>
            <person name="Karra K."/>
            <person name="Nash R.S."/>
            <person name="Weng S."/>
            <person name="Wong E.D."/>
            <person name="Lloyd P."/>
            <person name="Skrzypek M.S."/>
            <person name="Miyasato S.R."/>
            <person name="Simison M."/>
            <person name="Cherry J.M."/>
        </authorList>
    </citation>
    <scope>GENOME REANNOTATION</scope>
    <source>
        <strain>ATCC 204508 / S288c</strain>
    </source>
</reference>
<reference key="4">
    <citation type="journal article" date="1994" name="J. Biol. Chem.">
        <title>Purified yeast translational initiation factor eIF-3 is an RNA-binding protein complex that contains the PRT1 protein.</title>
        <authorList>
            <person name="Naranda T."/>
            <person name="MacMillan S.E."/>
            <person name="Hershey J.W.B."/>
        </authorList>
    </citation>
    <scope>IDENTIFICATION IN THE EIF-3 COMPLEX</scope>
</reference>
<reference key="5">
    <citation type="journal article" date="1998" name="J. Biol. Chem.">
        <title>Nip1p associates with 40 S ribosomes and the Prt1p subunit of eukaryotic initiation factor 3 and is required for efficient translation initiation.</title>
        <authorList>
            <person name="Greenberg J.R."/>
            <person name="Phan L."/>
            <person name="Gu Z."/>
            <person name="deSilva A."/>
            <person name="Apolito C."/>
            <person name="Sherman F."/>
            <person name="Hinnebusch A.G."/>
            <person name="Goldfarb D.S."/>
        </authorList>
    </citation>
    <scope>INTERACTION WITH PRT1</scope>
    <scope>ASSOCIATION WITH 40S RIBOSOMES</scope>
</reference>
<reference key="6">
    <citation type="journal article" date="1998" name="Mol. Cell. Biol.">
        <title>Identification of a translation initiation factor 3 (eIF3) core complex, conserved in yeast and mammals, that interacts with eIF5.</title>
        <authorList>
            <person name="Phan L."/>
            <person name="Zhang X."/>
            <person name="Asano K."/>
            <person name="Anderson J."/>
            <person name="Vornlocher H.-P."/>
            <person name="Greenberg J.R."/>
            <person name="Qin J."/>
            <person name="Hinnebusch A.G."/>
        </authorList>
    </citation>
    <scope>IDENTIFICATION IN THE EIF-3 CORE COMPLEX</scope>
    <scope>IDENTIFICATION BY MASS SPECTROMETRY</scope>
    <scope>INTERACTION WITH TIF5 AND SUI1</scope>
</reference>
<reference key="7">
    <citation type="journal article" date="1999" name="EMBO J.">
        <title>Conserved bipartite motifs in yeast eIF5 and eIF2Bepsilon, GTPase-activating and GDP-GTP exchange factors in translation initiation, mediate binding to their common substrate eIF2.</title>
        <authorList>
            <person name="Asano K."/>
            <person name="Krishnamoorthy T."/>
            <person name="Phan L."/>
            <person name="Pavitt G.D."/>
            <person name="Hinnebusch A.G."/>
        </authorList>
    </citation>
    <scope>INTERACTION WITH TIF5</scope>
</reference>
<reference key="8">
    <citation type="journal article" date="2003" name="Genes Dev.">
        <title>The yeast eIF3 subunits TIF32/a, NIP1/c, and eIF5 make critical connections with the 40S ribosome in vivo.</title>
        <authorList>
            <person name="Valasek L."/>
            <person name="Mathew A.A."/>
            <person name="Shin B.-S."/>
            <person name="Nielsen K.H."/>
            <person name="Szamecz B."/>
            <person name="Hinnebusch A.G."/>
        </authorList>
    </citation>
    <scope>FUNCTION</scope>
    <scope>ASSOCIATION WITH THE 40S RIBOSOME</scope>
    <scope>INTERACTION WITH RPS0A</scope>
</reference>
<reference key="9">
    <citation type="journal article" date="2003" name="Nature">
        <title>Global analysis of protein expression in yeast.</title>
        <authorList>
            <person name="Ghaemmaghami S."/>
            <person name="Huh W.-K."/>
            <person name="Bower K."/>
            <person name="Howson R.W."/>
            <person name="Belle A."/>
            <person name="Dephoure N."/>
            <person name="O'Shea E.K."/>
            <person name="Weissman J.S."/>
        </authorList>
    </citation>
    <scope>LEVEL OF PROTEIN EXPRESSION [LARGE SCALE ANALYSIS]</scope>
</reference>
<reference key="10">
    <citation type="journal article" date="2006" name="Mol. Cell. Biol.">
        <title>Interaction of the RNP1 motif in PRT1 with HCR1 promotes 40S binding of eukaryotic initiation factor 3 in yeast.</title>
        <authorList>
            <person name="Nielsen K.H."/>
            <person name="Valasek L."/>
            <person name="Sykes C."/>
            <person name="Jivotovskaya A."/>
            <person name="Hinnebusch A.G."/>
        </authorList>
    </citation>
    <scope>INTERACTION WITH PRT1</scope>
    <scope>ASSOCIATION WITH THE 40S RIBOSOME</scope>
</reference>
<reference key="11">
    <citation type="journal article" date="2007" name="J. Proteome Res.">
        <title>Large-scale phosphorylation analysis of alpha-factor-arrested Saccharomyces cerevisiae.</title>
        <authorList>
            <person name="Li X."/>
            <person name="Gerber S.A."/>
            <person name="Rudner A.D."/>
            <person name="Beausoleil S.A."/>
            <person name="Haas W."/>
            <person name="Villen J."/>
            <person name="Elias J.E."/>
            <person name="Gygi S.P."/>
        </authorList>
    </citation>
    <scope>PHOSPHORYLATION [LARGE SCALE ANALYSIS] AT SER-98; SER-99 AND SER-103</scope>
    <scope>IDENTIFICATION BY MASS SPECTROMETRY [LARGE SCALE ANALYSIS]</scope>
    <source>
        <strain>ADR376</strain>
    </source>
</reference>
<reference key="12">
    <citation type="journal article" date="2008" name="Mol. Cell. Proteomics">
        <title>A multidimensional chromatography technology for in-depth phosphoproteome analysis.</title>
        <authorList>
            <person name="Albuquerque C.P."/>
            <person name="Smolka M.B."/>
            <person name="Payne S.H."/>
            <person name="Bafna V."/>
            <person name="Eng J."/>
            <person name="Zhou H."/>
        </authorList>
    </citation>
    <scope>IDENTIFICATION BY MASS SPECTROMETRY [LARGE SCALE ANALYSIS]</scope>
</reference>
<reference key="13">
    <citation type="journal article" date="2008" name="Proc. Natl. Acad. Sci. U.S.A.">
        <title>Mass spectrometry reveals modularity and a complete subunit interaction map of the eukaryotic translation factor eIF3.</title>
        <authorList>
            <person name="Zhou M."/>
            <person name="Sandercock A.M."/>
            <person name="Fraser C.S."/>
            <person name="Ridlova G."/>
            <person name="Stephens E."/>
            <person name="Schenauer M.R."/>
            <person name="Yokoi-Fong T."/>
            <person name="Barsky D."/>
            <person name="Leary J.A."/>
            <person name="Hershey J.W.B."/>
            <person name="Doudna J.A."/>
            <person name="Robinson C.V."/>
        </authorList>
    </citation>
    <scope>IDENTIFICATION IN THE EIF-3 COMPLEX WITH PRT1; TIF32; TIF34 AND TIF35</scope>
</reference>
<reference key="14">
    <citation type="journal article" date="2009" name="Science">
        <title>Global analysis of Cdk1 substrate phosphorylation sites provides insights into evolution.</title>
        <authorList>
            <person name="Holt L.J."/>
            <person name="Tuch B.B."/>
            <person name="Villen J."/>
            <person name="Johnson A.D."/>
            <person name="Gygi S.P."/>
            <person name="Morgan D.O."/>
        </authorList>
    </citation>
    <scope>PHOSPHORYLATION [LARGE SCALE ANALYSIS] AT SER-98; SER-99 AND SER-103</scope>
    <scope>IDENTIFICATION BY MASS SPECTROMETRY [LARGE SCALE ANALYSIS]</scope>
</reference>
<keyword id="KW-0002">3D-structure</keyword>
<keyword id="KW-0963">Cytoplasm</keyword>
<keyword id="KW-0396">Initiation factor</keyword>
<keyword id="KW-0597">Phosphoprotein</keyword>
<keyword id="KW-0648">Protein biosynthesis</keyword>
<keyword id="KW-1185">Reference proteome</keyword>
<gene>
    <name evidence="1" type="primary">NIP1</name>
    <name type="ordered locus">YMR309C</name>
    <name type="ORF">YM9924.01C</name>
    <name type="ORF">YM9952.11C</name>
</gene>
<protein>
    <recommendedName>
        <fullName evidence="1">Eukaryotic translation initiation factor 3 subunit C</fullName>
        <shortName evidence="1">eIF3c</shortName>
    </recommendedName>
    <alternativeName>
        <fullName>Eukaryotic translation initiation factor 3 93 kDa subunit</fullName>
        <shortName evidence="1">eIF3 p93</shortName>
    </alternativeName>
    <alternativeName>
        <fullName>Nuclear transport protein NIP1</fullName>
    </alternativeName>
    <alternativeName>
        <fullName>Translation initiation factor eIF3, p93 subunit</fullName>
    </alternativeName>
</protein>
<sequence length="812" mass="93204">MSRFFSSNYEYDVASSSSEEDLLSSSEEDLLSSSSSESELDQESDDSFFNESESESEADVDSDDSDAKPYGPDWFKKSEFRKQGGGSNKFLKSSNYDSSDEESDEEDGKKVVKSAKEKLLDEMQDVYNKISQAENSDDWLTISNEFDLISRLLVRAQQQNWGTPNIFIKVVAQVEDAVNNTQQADLKNKAVARAYNTTKQRVKKVSRENEDSMAKFRNDPESFDKEPTADLDISANGFTISSSQGNDQAVQEDFFTRLQTIIDSRGKKTVNQQSLISTLEELLTVAEKPYEFIMAYLTLIPSRFDASANLSYQPIDQWKSSFNDISKLLSILDQTIDTYQVNEFADPIDFIEDEPKEDSDGVKRILGSIFSFVERLDDEFMKSLLNIDPHSSDYLIRLRDEQSIYNLILRTQLYFEATLKDEHDLERALTRPFVKRLDHIYYKSENLIKIMETAAWNIIPAQFKSKFTSKDQLDSADYVDNLIDGLSTILSKQNNIAVQKRAILYNIYYTALNKDFQTAKDMLLTSQVQTNINQFDSSLQILFNRVVVQLGLSAFKLCLIEECHQILNDLLSSSHLREILGQQSLHRISLNSSNNASADERARQCLPYHQHINLDLIDVVFLTCSLLIEIPRMTAFYSGIKVKRIPYSPKSIRRSLEHYDKLSFQGPPETLRDYVLFAAKSMQKGNWRDSVKYLREIKSWALLPNMETVLNSLTERVQVESLKTYFFSFKRFYSSFSVAKLAELFDLPENKVVEVLQSVIAELEIPAKLNDEKTIFVVEKGDEITKLEEAMVKLNKEYKIAKERLNPPSNRR</sequence>
<proteinExistence type="evidence at protein level"/>
<name>EIF3C_YEAST</name>